<sequence>NLYQFKNMIKCTVPSRSWWDFADYGCYCGRGGSGTPVDDLDRCCQVHDNCYNEAEKISGCWPYFKTYSYECSQGTLTCKGDNNACAASVCDCDRLAAICFAGAPYNDNNYNIDLKARCQ</sequence>
<comment type="function">
    <text>PLA2 catalyzes the calcium-dependent hydrolysis of the 2-acyl groups in 3-sn-phosphoglycerides.</text>
</comment>
<comment type="catalytic activity">
    <reaction evidence="1 2">
        <text>a 1,2-diacyl-sn-glycero-3-phosphocholine + H2O = a 1-acyl-sn-glycero-3-phosphocholine + a fatty acid + H(+)</text>
        <dbReference type="Rhea" id="RHEA:15801"/>
        <dbReference type="ChEBI" id="CHEBI:15377"/>
        <dbReference type="ChEBI" id="CHEBI:15378"/>
        <dbReference type="ChEBI" id="CHEBI:28868"/>
        <dbReference type="ChEBI" id="CHEBI:57643"/>
        <dbReference type="ChEBI" id="CHEBI:58168"/>
        <dbReference type="EC" id="3.1.1.4"/>
    </reaction>
</comment>
<comment type="cofactor">
    <cofactor evidence="8">
        <name>Ca(2+)</name>
        <dbReference type="ChEBI" id="CHEBI:29108"/>
    </cofactor>
    <text evidence="8">Binds 1 Ca(2+) ion per subunit.</text>
</comment>
<comment type="subunit">
    <text evidence="4 5 6">Homotrimer.</text>
</comment>
<comment type="subcellular location">
    <subcellularLocation>
        <location evidence="3">Secreted</location>
    </subcellularLocation>
</comment>
<comment type="tissue specificity">
    <text evidence="3">Expressed by the venom gland.</text>
</comment>
<comment type="miscellaneous">
    <text>Is not neurotoxic.</text>
</comment>
<comment type="similarity">
    <text evidence="7">Belongs to the phospholipase A2 family. Group I subfamily. D49 sub-subfamily.</text>
</comment>
<comment type="sequence caution" evidence="7">
    <conflict type="erroneous initiation">
        <sequence resource="EMBL-CDS" id="CAA45372"/>
    </conflict>
    <text>Extended N-terminus.</text>
</comment>
<protein>
    <recommendedName>
        <fullName>Acidic phospholipase A2 2</fullName>
        <shortName>PLA22</shortName>
        <shortName>svPLA2</shortName>
        <ecNumber>3.1.1.4</ecNumber>
    </recommendedName>
    <alternativeName>
        <fullName>Phosphatidylcholine 2-acylhydrolase</fullName>
    </alternativeName>
</protein>
<keyword id="KW-0002">3D-structure</keyword>
<keyword id="KW-0106">Calcium</keyword>
<keyword id="KW-0903">Direct protein sequencing</keyword>
<keyword id="KW-1015">Disulfide bond</keyword>
<keyword id="KW-0378">Hydrolase</keyword>
<keyword id="KW-0442">Lipid degradation</keyword>
<keyword id="KW-0443">Lipid metabolism</keyword>
<keyword id="KW-0479">Metal-binding</keyword>
<keyword id="KW-1185">Reference proteome</keyword>
<keyword id="KW-0964">Secreted</keyword>
<name>PA2A2_NAJNA</name>
<organism>
    <name type="scientific">Naja naja</name>
    <name type="common">Indian cobra</name>
    <dbReference type="NCBI Taxonomy" id="35670"/>
    <lineage>
        <taxon>Eukaryota</taxon>
        <taxon>Metazoa</taxon>
        <taxon>Chordata</taxon>
        <taxon>Craniata</taxon>
        <taxon>Vertebrata</taxon>
        <taxon>Euteleostomi</taxon>
        <taxon>Lepidosauria</taxon>
        <taxon>Squamata</taxon>
        <taxon>Bifurcata</taxon>
        <taxon>Unidentata</taxon>
        <taxon>Episquamata</taxon>
        <taxon>Toxicofera</taxon>
        <taxon>Serpentes</taxon>
        <taxon>Colubroidea</taxon>
        <taxon>Elapidae</taxon>
        <taxon>Elapinae</taxon>
        <taxon>Naja</taxon>
    </lineage>
</organism>
<reference key="1">
    <citation type="journal article" date="1990" name="Biochim. Biophys. Acta">
        <title>Amino acid sequence and circular dichroism of Indian cobra (Naja naja naja) venom acidic phospholipase A2.</title>
        <authorList>
            <person name="Davidson F.F."/>
            <person name="Dennis E.A."/>
        </authorList>
    </citation>
    <scope>PROTEIN SEQUENCE</scope>
    <scope>CIRCULAR DICHROISM</scope>
    <source>
        <tissue>Venom</tissue>
    </source>
</reference>
<reference key="2">
    <citation type="journal article" date="1989" name="Protein Seq. Data Anal.">
        <title>Phospholipase A2 from cobra (Naja naja naja) venom. Primary structure and subspecies variation.</title>
        <authorList>
            <person name="Shafqat J."/>
            <person name="Beg O.U."/>
            <person name="Joernvall H."/>
            <person name="Zaidi Z.H."/>
        </authorList>
    </citation>
    <scope>PROTEIN SEQUENCE</scope>
    <source>
        <tissue>Venom</tissue>
    </source>
</reference>
<reference key="3">
    <citation type="journal article" date="1992" name="Biochim. Biophys. Acta">
        <title>Renaturation of cobra venom phospholipase A2 expressed from a synthetic gene in Escherichia coli.</title>
        <authorList>
            <person name="Kelley M.J."/>
            <person name="Crowl R.M."/>
            <person name="Dennis E.A."/>
        </authorList>
    </citation>
    <scope>NUCLEOTIDE SEQUENCE [GENOMIC DNA]</scope>
</reference>
<reference key="4">
    <citation type="journal article" date="2010" name="Biomed. Res.">
        <title>Molecular diversity in venom proteins of the Russell's viper (Daboia russellii russellii) and the Indian cobra (Naja naja) in Sri Lanka.</title>
        <authorList>
            <person name="Suzuki M."/>
            <person name="Itoh T."/>
            <person name="Bandaranayake B.M.A.I.K."/>
            <person name="Ranasinghe J.G."/>
            <person name="Athauda S.B."/>
            <person name="Moriyama A."/>
        </authorList>
    </citation>
    <scope>PROTEIN SEQUENCE OF 1-20</scope>
    <scope>SUBCELLULAR LOCATION</scope>
    <scope>TISSUE SPECIFICITY</scope>
    <source>
        <tissue>Venom</tissue>
    </source>
</reference>
<reference key="5">
    <citation type="journal article" date="1993" name="Proc. Natl. Acad. Sci. U.S.A.">
        <title>Crystal structure of phospholipase A2 from Indian cobra reveals a trimeric association.</title>
        <authorList>
            <person name="Fremont D.H."/>
            <person name="Anderson D.H."/>
            <person name="Wilson I.A."/>
            <person name="Dennis E.A."/>
            <person name="Xuong N.-H."/>
        </authorList>
    </citation>
    <scope>X-RAY CRYSTALLOGRAPHY (2.3 ANGSTROMS) IN COMPLEX WITH CALCIUM ION</scope>
    <scope>COFACTOR</scope>
    <scope>DISULFIDE BONDS</scope>
    <scope>SUBUNIT</scope>
    <source>
        <tissue>Venom</tissue>
    </source>
</reference>
<reference key="6">
    <citation type="journal article" date="1998" name="J. Mol. Biol.">
        <title>Structures of two novel crystal forms of Naja naja naja phospholipase A2 lacking Ca2+ reveal trimeric packing.</title>
        <authorList>
            <person name="Segelke B.W."/>
            <person name="Nguyen D."/>
            <person name="Chee R."/>
            <person name="Xuong N.H."/>
            <person name="Dennis E.A."/>
        </authorList>
    </citation>
    <scope>X-RAY CRYSTALLOGRAPHY (1.8 ANGSTROMS)</scope>
    <scope>DISULFIDE BONDS</scope>
    <scope>SUBUNIT</scope>
    <source>
        <tissue>Venom</tissue>
    </source>
</reference>
<reference key="7">
    <citation type="journal article" date="2010" name="J. Mol. Biol.">
        <title>Nonantibiotic properties of tetracyclines: structural basis for inhibition of secretory phospholipase A2.</title>
        <authorList>
            <person name="Dalm D."/>
            <person name="Palm G.J."/>
            <person name="Aleksandrov A."/>
            <person name="Simonson T."/>
            <person name="Hinrichs W."/>
        </authorList>
    </citation>
    <scope>X-RAY CRYSTALLOGRAPHY (1.65 ANGSTROMS) IN COMPLEX WITH AN INHIBITOR</scope>
    <scope>DISULFIDE BONDS</scope>
</reference>
<evidence type="ECO:0000255" key="1">
    <source>
        <dbReference type="PROSITE-ProRule" id="PRU10035"/>
    </source>
</evidence>
<evidence type="ECO:0000255" key="2">
    <source>
        <dbReference type="PROSITE-ProRule" id="PRU10036"/>
    </source>
</evidence>
<evidence type="ECO:0000269" key="3">
    <source>
    </source>
</evidence>
<evidence type="ECO:0000269" key="4">
    <source>
    </source>
</evidence>
<evidence type="ECO:0000269" key="5">
    <source>
    </source>
</evidence>
<evidence type="ECO:0000269" key="6">
    <source>
    </source>
</evidence>
<evidence type="ECO:0000305" key="7"/>
<evidence type="ECO:0000305" key="8">
    <source>
    </source>
</evidence>
<evidence type="ECO:0007744" key="9">
    <source>
        <dbReference type="PDB" id="1A3D"/>
    </source>
</evidence>
<evidence type="ECO:0007744" key="10">
    <source>
        <dbReference type="PDB" id="1PSH"/>
    </source>
</evidence>
<evidence type="ECO:0007744" key="11">
    <source>
        <dbReference type="PDB" id="2WQ5"/>
    </source>
</evidence>
<evidence type="ECO:0007829" key="12">
    <source>
        <dbReference type="PDB" id="1A3D"/>
    </source>
</evidence>
<evidence type="ECO:0007829" key="13">
    <source>
        <dbReference type="PDB" id="2WQ5"/>
    </source>
</evidence>
<feature type="chain" id="PRO_0000161669" description="Acidic phospholipase A2 2">
    <location>
        <begin position="1"/>
        <end position="119"/>
    </location>
</feature>
<feature type="active site" evidence="8">
    <location>
        <position position="47"/>
    </location>
</feature>
<feature type="active site" evidence="8">
    <location>
        <position position="93"/>
    </location>
</feature>
<feature type="binding site" evidence="5 10">
    <location>
        <position position="27"/>
    </location>
    <ligand>
        <name>Ca(2+)</name>
        <dbReference type="ChEBI" id="CHEBI:29108"/>
    </ligand>
</feature>
<feature type="binding site" evidence="5 10">
    <location>
        <position position="29"/>
    </location>
    <ligand>
        <name>Ca(2+)</name>
        <dbReference type="ChEBI" id="CHEBI:29108"/>
    </ligand>
</feature>
<feature type="binding site" evidence="5 10">
    <location>
        <position position="31"/>
    </location>
    <ligand>
        <name>Ca(2+)</name>
        <dbReference type="ChEBI" id="CHEBI:29108"/>
    </ligand>
</feature>
<feature type="binding site" evidence="5 10">
    <location>
        <position position="48"/>
    </location>
    <ligand>
        <name>Ca(2+)</name>
        <dbReference type="ChEBI" id="CHEBI:29108"/>
    </ligand>
</feature>
<feature type="disulfide bond" evidence="4 5 6 9 10 11">
    <location>
        <begin position="11"/>
        <end position="71"/>
    </location>
</feature>
<feature type="disulfide bond" evidence="4 5 6 9 10 11">
    <location>
        <begin position="26"/>
        <end position="118"/>
    </location>
</feature>
<feature type="disulfide bond" evidence="4 5 6 9 10 11">
    <location>
        <begin position="28"/>
        <end position="44"/>
    </location>
</feature>
<feature type="disulfide bond" evidence="4 5 6 9 10 11">
    <location>
        <begin position="43"/>
        <end position="99"/>
    </location>
</feature>
<feature type="disulfide bond" evidence="4 5 6 9 10 11">
    <location>
        <begin position="50"/>
        <end position="92"/>
    </location>
</feature>
<feature type="disulfide bond" evidence="4 5 6 9 10 11">
    <location>
        <begin position="60"/>
        <end position="85"/>
    </location>
</feature>
<feature type="disulfide bond" evidence="4 5 6 9 10 11">
    <location>
        <begin position="78"/>
        <end position="90"/>
    </location>
</feature>
<feature type="helix" evidence="13">
    <location>
        <begin position="2"/>
        <end position="12"/>
    </location>
</feature>
<feature type="helix" evidence="13">
    <location>
        <begin position="18"/>
        <end position="21"/>
    </location>
</feature>
<feature type="strand" evidence="13">
    <location>
        <begin position="22"/>
        <end position="24"/>
    </location>
</feature>
<feature type="turn" evidence="13">
    <location>
        <begin position="25"/>
        <end position="27"/>
    </location>
</feature>
<feature type="strand" evidence="12">
    <location>
        <begin position="28"/>
        <end position="30"/>
    </location>
</feature>
<feature type="strand" evidence="13">
    <location>
        <begin position="32"/>
        <end position="34"/>
    </location>
</feature>
<feature type="helix" evidence="13">
    <location>
        <begin position="39"/>
        <end position="54"/>
    </location>
</feature>
<feature type="helix" evidence="13">
    <location>
        <begin position="62"/>
        <end position="64"/>
    </location>
</feature>
<feature type="strand" evidence="13">
    <location>
        <begin position="69"/>
        <end position="72"/>
    </location>
</feature>
<feature type="strand" evidence="13">
    <location>
        <begin position="75"/>
        <end position="78"/>
    </location>
</feature>
<feature type="helix" evidence="13">
    <location>
        <begin position="84"/>
        <end position="102"/>
    </location>
</feature>
<feature type="helix" evidence="13">
    <location>
        <begin position="107"/>
        <end position="109"/>
    </location>
</feature>
<feature type="helix" evidence="13">
    <location>
        <begin position="114"/>
        <end position="117"/>
    </location>
</feature>
<dbReference type="EC" id="3.1.1.4"/>
<dbReference type="EMBL" id="X63947">
    <property type="protein sequence ID" value="CAA45372.1"/>
    <property type="status" value="ALT_INIT"/>
    <property type="molecule type" value="Genomic_DNA"/>
</dbReference>
<dbReference type="PIR" id="S07528">
    <property type="entry name" value="S07528"/>
</dbReference>
<dbReference type="PDB" id="1A3D">
    <property type="method" value="X-ray"/>
    <property type="resolution" value="1.80 A"/>
    <property type="chains" value="A=1-119"/>
</dbReference>
<dbReference type="PDB" id="1A3F">
    <property type="method" value="X-ray"/>
    <property type="resolution" value="2.65 A"/>
    <property type="chains" value="A/B/C=1-119"/>
</dbReference>
<dbReference type="PDB" id="1OWS">
    <property type="method" value="X-ray"/>
    <property type="resolution" value="2.30 A"/>
    <property type="chains" value="A=1-118, B=1-119"/>
</dbReference>
<dbReference type="PDB" id="1PSH">
    <property type="method" value="X-ray"/>
    <property type="resolution" value="2.30 A"/>
    <property type="chains" value="A/B/C=1-119"/>
</dbReference>
<dbReference type="PDB" id="2WQ5">
    <property type="method" value="X-ray"/>
    <property type="resolution" value="1.65 A"/>
    <property type="chains" value="A=1-119"/>
</dbReference>
<dbReference type="PDBsum" id="1A3D"/>
<dbReference type="PDBsum" id="1A3F"/>
<dbReference type="PDBsum" id="1OWS"/>
<dbReference type="PDBsum" id="1PSH"/>
<dbReference type="PDBsum" id="2WQ5"/>
<dbReference type="SMR" id="P15445"/>
<dbReference type="BindingDB" id="P15445"/>
<dbReference type="ChEMBL" id="CHEMBL5584"/>
<dbReference type="SwissLipids" id="SLP:000000937"/>
<dbReference type="BRENDA" id="3.1.1.4">
    <property type="organism ID" value="3557"/>
</dbReference>
<dbReference type="EvolutionaryTrace" id="P15445"/>
<dbReference type="Proteomes" id="UP000694559">
    <property type="component" value="Unplaced"/>
</dbReference>
<dbReference type="GO" id="GO:0005576">
    <property type="term" value="C:extracellular region"/>
    <property type="evidence" value="ECO:0007669"/>
    <property type="project" value="UniProtKB-SubCell"/>
</dbReference>
<dbReference type="GO" id="GO:0005509">
    <property type="term" value="F:calcium ion binding"/>
    <property type="evidence" value="ECO:0007669"/>
    <property type="project" value="InterPro"/>
</dbReference>
<dbReference type="GO" id="GO:0047498">
    <property type="term" value="F:calcium-dependent phospholipase A2 activity"/>
    <property type="evidence" value="ECO:0007669"/>
    <property type="project" value="TreeGrafter"/>
</dbReference>
<dbReference type="GO" id="GO:0005543">
    <property type="term" value="F:phospholipid binding"/>
    <property type="evidence" value="ECO:0007669"/>
    <property type="project" value="TreeGrafter"/>
</dbReference>
<dbReference type="GO" id="GO:0050482">
    <property type="term" value="P:arachidonate secretion"/>
    <property type="evidence" value="ECO:0007669"/>
    <property type="project" value="InterPro"/>
</dbReference>
<dbReference type="GO" id="GO:0016042">
    <property type="term" value="P:lipid catabolic process"/>
    <property type="evidence" value="ECO:0007669"/>
    <property type="project" value="UniProtKB-KW"/>
</dbReference>
<dbReference type="GO" id="GO:0006644">
    <property type="term" value="P:phospholipid metabolic process"/>
    <property type="evidence" value="ECO:0007669"/>
    <property type="project" value="InterPro"/>
</dbReference>
<dbReference type="CDD" id="cd00125">
    <property type="entry name" value="PLA2c"/>
    <property type="match status" value="1"/>
</dbReference>
<dbReference type="FunFam" id="1.20.90.10:FF:000007">
    <property type="entry name" value="Acidic phospholipase A2"/>
    <property type="match status" value="1"/>
</dbReference>
<dbReference type="Gene3D" id="1.20.90.10">
    <property type="entry name" value="Phospholipase A2 domain"/>
    <property type="match status" value="1"/>
</dbReference>
<dbReference type="InterPro" id="IPR001211">
    <property type="entry name" value="PLipase_A2"/>
</dbReference>
<dbReference type="InterPro" id="IPR033112">
    <property type="entry name" value="PLipase_A2_Asp_AS"/>
</dbReference>
<dbReference type="InterPro" id="IPR016090">
    <property type="entry name" value="PLipase_A2_dom"/>
</dbReference>
<dbReference type="InterPro" id="IPR036444">
    <property type="entry name" value="PLipase_A2_dom_sf"/>
</dbReference>
<dbReference type="InterPro" id="IPR033113">
    <property type="entry name" value="PLipase_A2_His_AS"/>
</dbReference>
<dbReference type="PANTHER" id="PTHR11716:SF94">
    <property type="entry name" value="PHOSPHOLIPASE A2"/>
    <property type="match status" value="1"/>
</dbReference>
<dbReference type="PANTHER" id="PTHR11716">
    <property type="entry name" value="PHOSPHOLIPASE A2 FAMILY MEMBER"/>
    <property type="match status" value="1"/>
</dbReference>
<dbReference type="Pfam" id="PF00068">
    <property type="entry name" value="Phospholip_A2_1"/>
    <property type="match status" value="1"/>
</dbReference>
<dbReference type="PRINTS" id="PR00389">
    <property type="entry name" value="PHPHLIPASEA2"/>
</dbReference>
<dbReference type="SMART" id="SM00085">
    <property type="entry name" value="PA2c"/>
    <property type="match status" value="1"/>
</dbReference>
<dbReference type="SUPFAM" id="SSF48619">
    <property type="entry name" value="Phospholipase A2, PLA2"/>
    <property type="match status" value="1"/>
</dbReference>
<dbReference type="PROSITE" id="PS00119">
    <property type="entry name" value="PA2_ASP"/>
    <property type="match status" value="1"/>
</dbReference>
<dbReference type="PROSITE" id="PS00118">
    <property type="entry name" value="PA2_HIS"/>
    <property type="match status" value="1"/>
</dbReference>
<proteinExistence type="evidence at protein level"/>
<accession>P15445</accession>
<accession>Q65ZF5</accession>